<reference key="1">
    <citation type="submission" date="2007-07" db="EMBL/GenBank/DDBJ databases">
        <title>Genome sequence of Campylobacter curvus 525.92 isolated from human feces.</title>
        <authorList>
            <person name="Fouts D.E."/>
            <person name="Mongodin E.F."/>
            <person name="Puiu D."/>
            <person name="Sebastian Y."/>
            <person name="Miller W.G."/>
            <person name="Mandrell R.E."/>
            <person name="Lastovica A.J."/>
            <person name="Nelson K.E."/>
        </authorList>
    </citation>
    <scope>NUCLEOTIDE SEQUENCE [LARGE SCALE GENOMIC DNA]</scope>
    <source>
        <strain>525.92</strain>
    </source>
</reference>
<evidence type="ECO:0000255" key="1">
    <source>
        <dbReference type="HAMAP-Rule" id="MF_00435"/>
    </source>
</evidence>
<evidence type="ECO:0000255" key="2">
    <source>
        <dbReference type="PROSITE-ProRule" id="PRU01197"/>
    </source>
</evidence>
<evidence type="ECO:0000255" key="3">
    <source>
        <dbReference type="PROSITE-ProRule" id="PRU01198"/>
    </source>
</evidence>
<sequence length="340" mass="36893">MAVNIYYDKDCDLSLIQSKKVAIVGFGSQGHAHAENLRDSGVKVVIGLAKGGKSWAKAEAKGFDVKIVSEATKDADVVMILTPDELQSEIYKKEIEPNLKDGAAIAFGHGFNVHFGQIKAPKNIDVIMIAPKAPGHTVRSEFVRGGGIPDLIAVEQDASGQAKQIALSYASAIGGGRTGIIETTFKDETETDLFGEQAVLCGGLCALVNAGFETLVEAGYEPEMAYFECLHELKLIVDLMYQGGMADMRYSISNTAEYGDYVSGGRVVGEESKRAMKEVLKEIQNGKFAKDFILERKAGYVRMNAERSIAERSLLNQTGKKLRAMMPWISAGKLVDQNKN</sequence>
<proteinExistence type="inferred from homology"/>
<keyword id="KW-0028">Amino-acid biosynthesis</keyword>
<keyword id="KW-0100">Branched-chain amino acid biosynthesis</keyword>
<keyword id="KW-0460">Magnesium</keyword>
<keyword id="KW-0479">Metal-binding</keyword>
<keyword id="KW-0521">NADP</keyword>
<keyword id="KW-0560">Oxidoreductase</keyword>
<keyword id="KW-1185">Reference proteome</keyword>
<organism>
    <name type="scientific">Campylobacter curvus (strain 525.92)</name>
    <dbReference type="NCBI Taxonomy" id="360105"/>
    <lineage>
        <taxon>Bacteria</taxon>
        <taxon>Pseudomonadati</taxon>
        <taxon>Campylobacterota</taxon>
        <taxon>Epsilonproteobacteria</taxon>
        <taxon>Campylobacterales</taxon>
        <taxon>Campylobacteraceae</taxon>
        <taxon>Campylobacter</taxon>
    </lineage>
</organism>
<gene>
    <name evidence="1" type="primary">ilvC</name>
    <name type="ordered locus">Ccur92_06960</name>
    <name type="ORF">CCV52592_1581</name>
</gene>
<dbReference type="EC" id="1.1.1.86" evidence="1"/>
<dbReference type="EMBL" id="CP000767">
    <property type="protein sequence ID" value="EAU00640.1"/>
    <property type="molecule type" value="Genomic_DNA"/>
</dbReference>
<dbReference type="RefSeq" id="WP_011992126.1">
    <property type="nucleotide sequence ID" value="NC_009715.2"/>
</dbReference>
<dbReference type="SMR" id="A7GXQ8"/>
<dbReference type="STRING" id="360105.CCV52592_1581"/>
<dbReference type="KEGG" id="ccv:CCV52592_1581"/>
<dbReference type="HOGENOM" id="CLU_033821_0_1_7"/>
<dbReference type="OrthoDB" id="9804088at2"/>
<dbReference type="UniPathway" id="UPA00047">
    <property type="reaction ID" value="UER00056"/>
</dbReference>
<dbReference type="UniPathway" id="UPA00049">
    <property type="reaction ID" value="UER00060"/>
</dbReference>
<dbReference type="Proteomes" id="UP000006380">
    <property type="component" value="Chromosome"/>
</dbReference>
<dbReference type="GO" id="GO:0005829">
    <property type="term" value="C:cytosol"/>
    <property type="evidence" value="ECO:0007669"/>
    <property type="project" value="TreeGrafter"/>
</dbReference>
<dbReference type="GO" id="GO:0004455">
    <property type="term" value="F:ketol-acid reductoisomerase activity"/>
    <property type="evidence" value="ECO:0007669"/>
    <property type="project" value="UniProtKB-UniRule"/>
</dbReference>
<dbReference type="GO" id="GO:0000287">
    <property type="term" value="F:magnesium ion binding"/>
    <property type="evidence" value="ECO:0007669"/>
    <property type="project" value="UniProtKB-UniRule"/>
</dbReference>
<dbReference type="GO" id="GO:0050661">
    <property type="term" value="F:NADP binding"/>
    <property type="evidence" value="ECO:0007669"/>
    <property type="project" value="InterPro"/>
</dbReference>
<dbReference type="GO" id="GO:0009097">
    <property type="term" value="P:isoleucine biosynthetic process"/>
    <property type="evidence" value="ECO:0007669"/>
    <property type="project" value="UniProtKB-UniRule"/>
</dbReference>
<dbReference type="GO" id="GO:0009099">
    <property type="term" value="P:L-valine biosynthetic process"/>
    <property type="evidence" value="ECO:0007669"/>
    <property type="project" value="UniProtKB-UniRule"/>
</dbReference>
<dbReference type="FunFam" id="3.40.50.720:FF:000023">
    <property type="entry name" value="Ketol-acid reductoisomerase (NADP(+))"/>
    <property type="match status" value="1"/>
</dbReference>
<dbReference type="Gene3D" id="6.10.240.10">
    <property type="match status" value="1"/>
</dbReference>
<dbReference type="Gene3D" id="3.40.50.720">
    <property type="entry name" value="NAD(P)-binding Rossmann-like Domain"/>
    <property type="match status" value="1"/>
</dbReference>
<dbReference type="HAMAP" id="MF_00435">
    <property type="entry name" value="IlvC"/>
    <property type="match status" value="1"/>
</dbReference>
<dbReference type="InterPro" id="IPR008927">
    <property type="entry name" value="6-PGluconate_DH-like_C_sf"/>
</dbReference>
<dbReference type="InterPro" id="IPR013023">
    <property type="entry name" value="KARI"/>
</dbReference>
<dbReference type="InterPro" id="IPR000506">
    <property type="entry name" value="KARI_C"/>
</dbReference>
<dbReference type="InterPro" id="IPR013116">
    <property type="entry name" value="KARI_N"/>
</dbReference>
<dbReference type="InterPro" id="IPR014359">
    <property type="entry name" value="KARI_prok"/>
</dbReference>
<dbReference type="InterPro" id="IPR036291">
    <property type="entry name" value="NAD(P)-bd_dom_sf"/>
</dbReference>
<dbReference type="NCBIfam" id="TIGR00465">
    <property type="entry name" value="ilvC"/>
    <property type="match status" value="1"/>
</dbReference>
<dbReference type="NCBIfam" id="NF004017">
    <property type="entry name" value="PRK05479.1"/>
    <property type="match status" value="1"/>
</dbReference>
<dbReference type="NCBIfam" id="NF009940">
    <property type="entry name" value="PRK13403.1"/>
    <property type="match status" value="1"/>
</dbReference>
<dbReference type="PANTHER" id="PTHR21371">
    <property type="entry name" value="KETOL-ACID REDUCTOISOMERASE, MITOCHONDRIAL"/>
    <property type="match status" value="1"/>
</dbReference>
<dbReference type="PANTHER" id="PTHR21371:SF1">
    <property type="entry name" value="KETOL-ACID REDUCTOISOMERASE, MITOCHONDRIAL"/>
    <property type="match status" value="1"/>
</dbReference>
<dbReference type="Pfam" id="PF01450">
    <property type="entry name" value="KARI_C"/>
    <property type="match status" value="1"/>
</dbReference>
<dbReference type="Pfam" id="PF07991">
    <property type="entry name" value="KARI_N"/>
    <property type="match status" value="1"/>
</dbReference>
<dbReference type="PIRSF" id="PIRSF000116">
    <property type="entry name" value="IlvC_gammaproteo"/>
    <property type="match status" value="1"/>
</dbReference>
<dbReference type="SUPFAM" id="SSF48179">
    <property type="entry name" value="6-phosphogluconate dehydrogenase C-terminal domain-like"/>
    <property type="match status" value="1"/>
</dbReference>
<dbReference type="SUPFAM" id="SSF51735">
    <property type="entry name" value="NAD(P)-binding Rossmann-fold domains"/>
    <property type="match status" value="1"/>
</dbReference>
<dbReference type="PROSITE" id="PS51851">
    <property type="entry name" value="KARI_C"/>
    <property type="match status" value="1"/>
</dbReference>
<dbReference type="PROSITE" id="PS51850">
    <property type="entry name" value="KARI_N"/>
    <property type="match status" value="1"/>
</dbReference>
<accession>A7GXQ8</accession>
<name>ILVC_CAMC5</name>
<protein>
    <recommendedName>
        <fullName evidence="1">Ketol-acid reductoisomerase (NADP(+))</fullName>
        <shortName evidence="1">KARI</shortName>
        <ecNumber evidence="1">1.1.1.86</ecNumber>
    </recommendedName>
    <alternativeName>
        <fullName evidence="1">Acetohydroxy-acid isomeroreductase</fullName>
        <shortName evidence="1">AHIR</shortName>
    </alternativeName>
    <alternativeName>
        <fullName evidence="1">Alpha-keto-beta-hydroxylacyl reductoisomerase</fullName>
    </alternativeName>
    <alternativeName>
        <fullName evidence="1">Ketol-acid reductoisomerase type 1</fullName>
    </alternativeName>
    <alternativeName>
        <fullName evidence="1">Ketol-acid reductoisomerase type I</fullName>
    </alternativeName>
</protein>
<comment type="function">
    <text evidence="1">Involved in the biosynthesis of branched-chain amino acids (BCAA). Catalyzes an alkyl-migration followed by a ketol-acid reduction of (S)-2-acetolactate (S2AL) to yield (R)-2,3-dihydroxy-isovalerate. In the isomerase reaction, S2AL is rearranged via a Mg-dependent methyl migration to produce 3-hydroxy-3-methyl-2-ketobutyrate (HMKB). In the reductase reaction, this 2-ketoacid undergoes a metal-dependent reduction by NADPH to yield (R)-2,3-dihydroxy-isovalerate.</text>
</comment>
<comment type="catalytic activity">
    <reaction evidence="1">
        <text>(2R)-2,3-dihydroxy-3-methylbutanoate + NADP(+) = (2S)-2-acetolactate + NADPH + H(+)</text>
        <dbReference type="Rhea" id="RHEA:22068"/>
        <dbReference type="ChEBI" id="CHEBI:15378"/>
        <dbReference type="ChEBI" id="CHEBI:49072"/>
        <dbReference type="ChEBI" id="CHEBI:57783"/>
        <dbReference type="ChEBI" id="CHEBI:58349"/>
        <dbReference type="ChEBI" id="CHEBI:58476"/>
        <dbReference type="EC" id="1.1.1.86"/>
    </reaction>
</comment>
<comment type="catalytic activity">
    <reaction evidence="1">
        <text>(2R,3R)-2,3-dihydroxy-3-methylpentanoate + NADP(+) = (S)-2-ethyl-2-hydroxy-3-oxobutanoate + NADPH + H(+)</text>
        <dbReference type="Rhea" id="RHEA:13493"/>
        <dbReference type="ChEBI" id="CHEBI:15378"/>
        <dbReference type="ChEBI" id="CHEBI:49256"/>
        <dbReference type="ChEBI" id="CHEBI:49258"/>
        <dbReference type="ChEBI" id="CHEBI:57783"/>
        <dbReference type="ChEBI" id="CHEBI:58349"/>
        <dbReference type="EC" id="1.1.1.86"/>
    </reaction>
</comment>
<comment type="cofactor">
    <cofactor evidence="1">
        <name>Mg(2+)</name>
        <dbReference type="ChEBI" id="CHEBI:18420"/>
    </cofactor>
    <text evidence="1">Binds 2 magnesium ions per subunit.</text>
</comment>
<comment type="pathway">
    <text evidence="1">Amino-acid biosynthesis; L-isoleucine biosynthesis; L-isoleucine from 2-oxobutanoate: step 2/4.</text>
</comment>
<comment type="pathway">
    <text evidence="1">Amino-acid biosynthesis; L-valine biosynthesis; L-valine from pyruvate: step 2/4.</text>
</comment>
<comment type="similarity">
    <text evidence="1">Belongs to the ketol-acid reductoisomerase family.</text>
</comment>
<feature type="chain" id="PRO_1000050494" description="Ketol-acid reductoisomerase (NADP(+))">
    <location>
        <begin position="1"/>
        <end position="340"/>
    </location>
</feature>
<feature type="domain" description="KARI N-terminal Rossmann" evidence="2">
    <location>
        <begin position="3"/>
        <end position="183"/>
    </location>
</feature>
<feature type="domain" description="KARI C-terminal knotted" evidence="3">
    <location>
        <begin position="184"/>
        <end position="329"/>
    </location>
</feature>
<feature type="active site" evidence="1">
    <location>
        <position position="109"/>
    </location>
</feature>
<feature type="binding site" evidence="1">
    <location>
        <begin position="26"/>
        <end position="29"/>
    </location>
    <ligand>
        <name>NADP(+)</name>
        <dbReference type="ChEBI" id="CHEBI:58349"/>
    </ligand>
</feature>
<feature type="binding site" evidence="1">
    <location>
        <position position="54"/>
    </location>
    <ligand>
        <name>NADP(+)</name>
        <dbReference type="ChEBI" id="CHEBI:58349"/>
    </ligand>
</feature>
<feature type="binding site" evidence="1">
    <location>
        <begin position="84"/>
        <end position="87"/>
    </location>
    <ligand>
        <name>NADP(+)</name>
        <dbReference type="ChEBI" id="CHEBI:58349"/>
    </ligand>
</feature>
<feature type="binding site" evidence="1">
    <location>
        <position position="135"/>
    </location>
    <ligand>
        <name>NADP(+)</name>
        <dbReference type="ChEBI" id="CHEBI:58349"/>
    </ligand>
</feature>
<feature type="binding site" evidence="1">
    <location>
        <position position="192"/>
    </location>
    <ligand>
        <name>Mg(2+)</name>
        <dbReference type="ChEBI" id="CHEBI:18420"/>
        <label>1</label>
    </ligand>
</feature>
<feature type="binding site" evidence="1">
    <location>
        <position position="192"/>
    </location>
    <ligand>
        <name>Mg(2+)</name>
        <dbReference type="ChEBI" id="CHEBI:18420"/>
        <label>2</label>
    </ligand>
</feature>
<feature type="binding site" evidence="1">
    <location>
        <position position="196"/>
    </location>
    <ligand>
        <name>Mg(2+)</name>
        <dbReference type="ChEBI" id="CHEBI:18420"/>
        <label>1</label>
    </ligand>
</feature>
<feature type="binding site" evidence="1">
    <location>
        <position position="228"/>
    </location>
    <ligand>
        <name>Mg(2+)</name>
        <dbReference type="ChEBI" id="CHEBI:18420"/>
        <label>2</label>
    </ligand>
</feature>
<feature type="binding site" evidence="1">
    <location>
        <position position="232"/>
    </location>
    <ligand>
        <name>Mg(2+)</name>
        <dbReference type="ChEBI" id="CHEBI:18420"/>
        <label>2</label>
    </ligand>
</feature>
<feature type="binding site" evidence="1">
    <location>
        <position position="253"/>
    </location>
    <ligand>
        <name>substrate</name>
    </ligand>
</feature>